<evidence type="ECO:0000255" key="1">
    <source>
        <dbReference type="HAMAP-Rule" id="MF_01227"/>
    </source>
</evidence>
<gene>
    <name evidence="1" type="primary">pyrG</name>
    <name type="ordered locus">BSUIS_A1183</name>
</gene>
<name>PYRG_BRUSI</name>
<comment type="function">
    <text evidence="1">Catalyzes the ATP-dependent amination of UTP to CTP with either L-glutamine or ammonia as the source of nitrogen. Regulates intracellular CTP levels through interactions with the four ribonucleotide triphosphates.</text>
</comment>
<comment type="catalytic activity">
    <reaction evidence="1">
        <text>UTP + L-glutamine + ATP + H2O = CTP + L-glutamate + ADP + phosphate + 2 H(+)</text>
        <dbReference type="Rhea" id="RHEA:26426"/>
        <dbReference type="ChEBI" id="CHEBI:15377"/>
        <dbReference type="ChEBI" id="CHEBI:15378"/>
        <dbReference type="ChEBI" id="CHEBI:29985"/>
        <dbReference type="ChEBI" id="CHEBI:30616"/>
        <dbReference type="ChEBI" id="CHEBI:37563"/>
        <dbReference type="ChEBI" id="CHEBI:43474"/>
        <dbReference type="ChEBI" id="CHEBI:46398"/>
        <dbReference type="ChEBI" id="CHEBI:58359"/>
        <dbReference type="ChEBI" id="CHEBI:456216"/>
        <dbReference type="EC" id="6.3.4.2"/>
    </reaction>
</comment>
<comment type="catalytic activity">
    <reaction evidence="1">
        <text>L-glutamine + H2O = L-glutamate + NH4(+)</text>
        <dbReference type="Rhea" id="RHEA:15889"/>
        <dbReference type="ChEBI" id="CHEBI:15377"/>
        <dbReference type="ChEBI" id="CHEBI:28938"/>
        <dbReference type="ChEBI" id="CHEBI:29985"/>
        <dbReference type="ChEBI" id="CHEBI:58359"/>
    </reaction>
</comment>
<comment type="catalytic activity">
    <reaction evidence="1">
        <text>UTP + NH4(+) + ATP = CTP + ADP + phosphate + 2 H(+)</text>
        <dbReference type="Rhea" id="RHEA:16597"/>
        <dbReference type="ChEBI" id="CHEBI:15378"/>
        <dbReference type="ChEBI" id="CHEBI:28938"/>
        <dbReference type="ChEBI" id="CHEBI:30616"/>
        <dbReference type="ChEBI" id="CHEBI:37563"/>
        <dbReference type="ChEBI" id="CHEBI:43474"/>
        <dbReference type="ChEBI" id="CHEBI:46398"/>
        <dbReference type="ChEBI" id="CHEBI:456216"/>
    </reaction>
</comment>
<comment type="activity regulation">
    <text evidence="1">Allosterically activated by GTP, when glutamine is the substrate; GTP has no effect on the reaction when ammonia is the substrate. The allosteric effector GTP functions by stabilizing the protein conformation that binds the tetrahedral intermediate(s) formed during glutamine hydrolysis. Inhibited by the product CTP, via allosteric rather than competitive inhibition.</text>
</comment>
<comment type="pathway">
    <text evidence="1">Pyrimidine metabolism; CTP biosynthesis via de novo pathway; CTP from UDP: step 2/2.</text>
</comment>
<comment type="subunit">
    <text evidence="1">Homotetramer.</text>
</comment>
<comment type="miscellaneous">
    <text evidence="1">CTPSs have evolved a hybrid strategy for distinguishing between UTP and CTP. The overlapping regions of the product feedback inhibitory and substrate sites recognize a common feature in both compounds, the triphosphate moiety. To differentiate isosteric substrate and product pyrimidine rings, an additional pocket far from the expected kinase/ligase catalytic site, specifically recognizes the cytosine and ribose portions of the product inhibitor.</text>
</comment>
<comment type="similarity">
    <text evidence="1">Belongs to the CTP synthase family.</text>
</comment>
<proteinExistence type="inferred from homology"/>
<keyword id="KW-0067">ATP-binding</keyword>
<keyword id="KW-0315">Glutamine amidotransferase</keyword>
<keyword id="KW-0436">Ligase</keyword>
<keyword id="KW-0460">Magnesium</keyword>
<keyword id="KW-0479">Metal-binding</keyword>
<keyword id="KW-0547">Nucleotide-binding</keyword>
<keyword id="KW-0665">Pyrimidine biosynthesis</keyword>
<dbReference type="EC" id="6.3.4.2" evidence="1"/>
<dbReference type="EMBL" id="CP000911">
    <property type="protein sequence ID" value="ABY38235.1"/>
    <property type="molecule type" value="Genomic_DNA"/>
</dbReference>
<dbReference type="RefSeq" id="WP_006070878.1">
    <property type="nucleotide sequence ID" value="NC_010169.1"/>
</dbReference>
<dbReference type="SMR" id="B0CGT4"/>
<dbReference type="KEGG" id="bmt:BSUIS_A1183"/>
<dbReference type="HOGENOM" id="CLU_011675_5_0_5"/>
<dbReference type="UniPathway" id="UPA00159">
    <property type="reaction ID" value="UER00277"/>
</dbReference>
<dbReference type="Proteomes" id="UP000008545">
    <property type="component" value="Chromosome I"/>
</dbReference>
<dbReference type="GO" id="GO:0005829">
    <property type="term" value="C:cytosol"/>
    <property type="evidence" value="ECO:0007669"/>
    <property type="project" value="TreeGrafter"/>
</dbReference>
<dbReference type="GO" id="GO:0005524">
    <property type="term" value="F:ATP binding"/>
    <property type="evidence" value="ECO:0007669"/>
    <property type="project" value="UniProtKB-KW"/>
</dbReference>
<dbReference type="GO" id="GO:0003883">
    <property type="term" value="F:CTP synthase activity"/>
    <property type="evidence" value="ECO:0007669"/>
    <property type="project" value="UniProtKB-UniRule"/>
</dbReference>
<dbReference type="GO" id="GO:0004359">
    <property type="term" value="F:glutaminase activity"/>
    <property type="evidence" value="ECO:0007669"/>
    <property type="project" value="RHEA"/>
</dbReference>
<dbReference type="GO" id="GO:0042802">
    <property type="term" value="F:identical protein binding"/>
    <property type="evidence" value="ECO:0007669"/>
    <property type="project" value="TreeGrafter"/>
</dbReference>
<dbReference type="GO" id="GO:0046872">
    <property type="term" value="F:metal ion binding"/>
    <property type="evidence" value="ECO:0007669"/>
    <property type="project" value="UniProtKB-KW"/>
</dbReference>
<dbReference type="GO" id="GO:0044210">
    <property type="term" value="P:'de novo' CTP biosynthetic process"/>
    <property type="evidence" value="ECO:0007669"/>
    <property type="project" value="UniProtKB-UniRule"/>
</dbReference>
<dbReference type="GO" id="GO:0019856">
    <property type="term" value="P:pyrimidine nucleobase biosynthetic process"/>
    <property type="evidence" value="ECO:0007669"/>
    <property type="project" value="TreeGrafter"/>
</dbReference>
<dbReference type="CDD" id="cd03113">
    <property type="entry name" value="CTPS_N"/>
    <property type="match status" value="1"/>
</dbReference>
<dbReference type="CDD" id="cd01746">
    <property type="entry name" value="GATase1_CTP_Synthase"/>
    <property type="match status" value="1"/>
</dbReference>
<dbReference type="FunFam" id="3.40.50.300:FF:000009">
    <property type="entry name" value="CTP synthase"/>
    <property type="match status" value="1"/>
</dbReference>
<dbReference type="FunFam" id="3.40.50.880:FF:000002">
    <property type="entry name" value="CTP synthase"/>
    <property type="match status" value="1"/>
</dbReference>
<dbReference type="Gene3D" id="3.40.50.880">
    <property type="match status" value="1"/>
</dbReference>
<dbReference type="Gene3D" id="3.40.50.300">
    <property type="entry name" value="P-loop containing nucleotide triphosphate hydrolases"/>
    <property type="match status" value="1"/>
</dbReference>
<dbReference type="HAMAP" id="MF_01227">
    <property type="entry name" value="PyrG"/>
    <property type="match status" value="1"/>
</dbReference>
<dbReference type="InterPro" id="IPR029062">
    <property type="entry name" value="Class_I_gatase-like"/>
</dbReference>
<dbReference type="InterPro" id="IPR004468">
    <property type="entry name" value="CTP_synthase"/>
</dbReference>
<dbReference type="InterPro" id="IPR017456">
    <property type="entry name" value="CTP_synthase_N"/>
</dbReference>
<dbReference type="InterPro" id="IPR017926">
    <property type="entry name" value="GATASE"/>
</dbReference>
<dbReference type="InterPro" id="IPR033828">
    <property type="entry name" value="GATase1_CTP_Synthase"/>
</dbReference>
<dbReference type="InterPro" id="IPR027417">
    <property type="entry name" value="P-loop_NTPase"/>
</dbReference>
<dbReference type="NCBIfam" id="NF003792">
    <property type="entry name" value="PRK05380.1"/>
    <property type="match status" value="1"/>
</dbReference>
<dbReference type="NCBIfam" id="TIGR00337">
    <property type="entry name" value="PyrG"/>
    <property type="match status" value="1"/>
</dbReference>
<dbReference type="PANTHER" id="PTHR11550">
    <property type="entry name" value="CTP SYNTHASE"/>
    <property type="match status" value="1"/>
</dbReference>
<dbReference type="PANTHER" id="PTHR11550:SF0">
    <property type="entry name" value="CTP SYNTHASE-RELATED"/>
    <property type="match status" value="1"/>
</dbReference>
<dbReference type="Pfam" id="PF06418">
    <property type="entry name" value="CTP_synth_N"/>
    <property type="match status" value="1"/>
</dbReference>
<dbReference type="Pfam" id="PF00117">
    <property type="entry name" value="GATase"/>
    <property type="match status" value="1"/>
</dbReference>
<dbReference type="SUPFAM" id="SSF52317">
    <property type="entry name" value="Class I glutamine amidotransferase-like"/>
    <property type="match status" value="1"/>
</dbReference>
<dbReference type="SUPFAM" id="SSF52540">
    <property type="entry name" value="P-loop containing nucleoside triphosphate hydrolases"/>
    <property type="match status" value="1"/>
</dbReference>
<dbReference type="PROSITE" id="PS51273">
    <property type="entry name" value="GATASE_TYPE_1"/>
    <property type="match status" value="1"/>
</dbReference>
<feature type="chain" id="PRO_1000139395" description="CTP synthase">
    <location>
        <begin position="1"/>
        <end position="542"/>
    </location>
</feature>
<feature type="domain" description="Glutamine amidotransferase type-1" evidence="1">
    <location>
        <begin position="291"/>
        <end position="541"/>
    </location>
</feature>
<feature type="region of interest" description="Amidoligase domain" evidence="1">
    <location>
        <begin position="1"/>
        <end position="265"/>
    </location>
</feature>
<feature type="active site" description="Nucleophile; for glutamine hydrolysis" evidence="1">
    <location>
        <position position="380"/>
    </location>
</feature>
<feature type="active site" evidence="1">
    <location>
        <position position="514"/>
    </location>
</feature>
<feature type="active site" evidence="1">
    <location>
        <position position="516"/>
    </location>
</feature>
<feature type="binding site" evidence="1">
    <location>
        <position position="13"/>
    </location>
    <ligand>
        <name>CTP</name>
        <dbReference type="ChEBI" id="CHEBI:37563"/>
        <note>allosteric inhibitor</note>
    </ligand>
</feature>
<feature type="binding site" evidence="1">
    <location>
        <position position="13"/>
    </location>
    <ligand>
        <name>UTP</name>
        <dbReference type="ChEBI" id="CHEBI:46398"/>
    </ligand>
</feature>
<feature type="binding site" evidence="1">
    <location>
        <begin position="14"/>
        <end position="19"/>
    </location>
    <ligand>
        <name>ATP</name>
        <dbReference type="ChEBI" id="CHEBI:30616"/>
    </ligand>
</feature>
<feature type="binding site" evidence="1">
    <location>
        <position position="54"/>
    </location>
    <ligand>
        <name>L-glutamine</name>
        <dbReference type="ChEBI" id="CHEBI:58359"/>
    </ligand>
</feature>
<feature type="binding site" evidence="1">
    <location>
        <position position="71"/>
    </location>
    <ligand>
        <name>ATP</name>
        <dbReference type="ChEBI" id="CHEBI:30616"/>
    </ligand>
</feature>
<feature type="binding site" evidence="1">
    <location>
        <position position="71"/>
    </location>
    <ligand>
        <name>Mg(2+)</name>
        <dbReference type="ChEBI" id="CHEBI:18420"/>
    </ligand>
</feature>
<feature type="binding site" evidence="1">
    <location>
        <position position="139"/>
    </location>
    <ligand>
        <name>Mg(2+)</name>
        <dbReference type="ChEBI" id="CHEBI:18420"/>
    </ligand>
</feature>
<feature type="binding site" evidence="1">
    <location>
        <begin position="146"/>
        <end position="148"/>
    </location>
    <ligand>
        <name>CTP</name>
        <dbReference type="ChEBI" id="CHEBI:37563"/>
        <note>allosteric inhibitor</note>
    </ligand>
</feature>
<feature type="binding site" evidence="1">
    <location>
        <begin position="186"/>
        <end position="191"/>
    </location>
    <ligand>
        <name>CTP</name>
        <dbReference type="ChEBI" id="CHEBI:37563"/>
        <note>allosteric inhibitor</note>
    </ligand>
</feature>
<feature type="binding site" evidence="1">
    <location>
        <begin position="186"/>
        <end position="191"/>
    </location>
    <ligand>
        <name>UTP</name>
        <dbReference type="ChEBI" id="CHEBI:46398"/>
    </ligand>
</feature>
<feature type="binding site" evidence="1">
    <location>
        <position position="222"/>
    </location>
    <ligand>
        <name>CTP</name>
        <dbReference type="ChEBI" id="CHEBI:37563"/>
        <note>allosteric inhibitor</note>
    </ligand>
</feature>
<feature type="binding site" evidence="1">
    <location>
        <position position="222"/>
    </location>
    <ligand>
        <name>UTP</name>
        <dbReference type="ChEBI" id="CHEBI:46398"/>
    </ligand>
</feature>
<feature type="binding site" evidence="1">
    <location>
        <position position="353"/>
    </location>
    <ligand>
        <name>L-glutamine</name>
        <dbReference type="ChEBI" id="CHEBI:58359"/>
    </ligand>
</feature>
<feature type="binding site" evidence="1">
    <location>
        <begin position="381"/>
        <end position="384"/>
    </location>
    <ligand>
        <name>L-glutamine</name>
        <dbReference type="ChEBI" id="CHEBI:58359"/>
    </ligand>
</feature>
<feature type="binding site" evidence="1">
    <location>
        <position position="404"/>
    </location>
    <ligand>
        <name>L-glutamine</name>
        <dbReference type="ChEBI" id="CHEBI:58359"/>
    </ligand>
</feature>
<feature type="binding site" evidence="1">
    <location>
        <position position="469"/>
    </location>
    <ligand>
        <name>L-glutamine</name>
        <dbReference type="ChEBI" id="CHEBI:58359"/>
    </ligand>
</feature>
<accession>B0CGT4</accession>
<reference key="1">
    <citation type="submission" date="2007-12" db="EMBL/GenBank/DDBJ databases">
        <title>Brucella suis ATCC 23445 whole genome shotgun sequencing project.</title>
        <authorList>
            <person name="Setubal J.C."/>
            <person name="Bowns C."/>
            <person name="Boyle S."/>
            <person name="Crasta O.R."/>
            <person name="Czar M.J."/>
            <person name="Dharmanolla C."/>
            <person name="Gillespie J.J."/>
            <person name="Kenyon R.W."/>
            <person name="Lu J."/>
            <person name="Mane S."/>
            <person name="Mohapatra S."/>
            <person name="Nagrani S."/>
            <person name="Purkayastha A."/>
            <person name="Rajasimha H.K."/>
            <person name="Shallom J.M."/>
            <person name="Shallom S."/>
            <person name="Shukla M."/>
            <person name="Snyder E.E."/>
            <person name="Sobral B.W."/>
            <person name="Wattam A.R."/>
            <person name="Will R."/>
            <person name="Williams K."/>
            <person name="Yoo H."/>
            <person name="Bruce D."/>
            <person name="Detter C."/>
            <person name="Munk C."/>
            <person name="Brettin T.S."/>
        </authorList>
    </citation>
    <scope>NUCLEOTIDE SEQUENCE [LARGE SCALE GENOMIC DNA]</scope>
    <source>
        <strain>ATCC 23445 / NCTC 10510</strain>
    </source>
</reference>
<organism>
    <name type="scientific">Brucella suis (strain ATCC 23445 / NCTC 10510)</name>
    <dbReference type="NCBI Taxonomy" id="470137"/>
    <lineage>
        <taxon>Bacteria</taxon>
        <taxon>Pseudomonadati</taxon>
        <taxon>Pseudomonadota</taxon>
        <taxon>Alphaproteobacteria</taxon>
        <taxon>Hyphomicrobiales</taxon>
        <taxon>Brucellaceae</taxon>
        <taxon>Brucella/Ochrobactrum group</taxon>
        <taxon>Brucella</taxon>
    </lineage>
</organism>
<sequence>MARYVFITGGVVSSLGKGIAAAALAALLQARGYRVRIRKLDPYLNVDPGTMSPYQHGEVFVTDDGAETDLDLGHYERFTGRPANQQDNITTGRIYRNIIEKERRGDYLGATVQVIPHVTDEIKNFVLQGNEDYDFVLCEIGGTVGDIEAMPFLEAIRQLGNELPRGTAVYIHLTLMPYIPAAGELKTKPTQHSVKELRSIGIAPDILLVRADREIPESERRKLSLFCNVRESAVIQALDVATIYDVPIAYHKEGLDSEVLSAFGIDPAPKPRMDRWEEVSHRLHNPEGEVTIAVVGKYTGLKDAYKSLIEALHHGGLANKVKVNLDWIEAEVFESEDPAPYLEKVHGILVPGGFGERGAEGKILAAKFARERKVPYFGICFGMQMACIEAARNLVGIEDASSSEFGPTREPVVGLMTEWLKGNMLEKRAAAGDLGGTMRLGAYEAVLKPDSKIAQIYGSTDIHERHRHRYEVNIDYKDRLEAAGLNFAGMSPDGVLPETVEYADHPWFIGVQYHPELKSRPFEPHPLFASFIEAAIEQSRLV</sequence>
<protein>
    <recommendedName>
        <fullName evidence="1">CTP synthase</fullName>
        <ecNumber evidence="1">6.3.4.2</ecNumber>
    </recommendedName>
    <alternativeName>
        <fullName evidence="1">Cytidine 5'-triphosphate synthase</fullName>
    </alternativeName>
    <alternativeName>
        <fullName evidence="1">Cytidine triphosphate synthetase</fullName>
        <shortName evidence="1">CTP synthetase</shortName>
        <shortName evidence="1">CTPS</shortName>
    </alternativeName>
    <alternativeName>
        <fullName evidence="1">UTP--ammonia ligase</fullName>
    </alternativeName>
</protein>